<evidence type="ECO:0000250" key="1"/>
<evidence type="ECO:0000250" key="2">
    <source>
        <dbReference type="UniProtKB" id="P29459"/>
    </source>
</evidence>
<evidence type="ECO:0000250" key="3">
    <source>
        <dbReference type="UniProtKB" id="P43431"/>
    </source>
</evidence>
<evidence type="ECO:0000255" key="4"/>
<evidence type="ECO:0000305" key="5"/>
<proteinExistence type="evidence at transcript level"/>
<organism>
    <name type="scientific">Papio anubis</name>
    <name type="common">Olive baboon</name>
    <dbReference type="NCBI Taxonomy" id="9555"/>
    <lineage>
        <taxon>Eukaryota</taxon>
        <taxon>Metazoa</taxon>
        <taxon>Chordata</taxon>
        <taxon>Craniata</taxon>
        <taxon>Vertebrata</taxon>
        <taxon>Euteleostomi</taxon>
        <taxon>Mammalia</taxon>
        <taxon>Eutheria</taxon>
        <taxon>Euarchontoglires</taxon>
        <taxon>Primates</taxon>
        <taxon>Haplorrhini</taxon>
        <taxon>Catarrhini</taxon>
        <taxon>Cercopithecidae</taxon>
        <taxon>Cercopithecinae</taxon>
        <taxon>Papio</taxon>
    </lineage>
</organism>
<accession>Q865Y2</accession>
<reference key="1">
    <citation type="submission" date="2003-02" db="EMBL/GenBank/DDBJ databases">
        <title>Nonhuman primate cytokines.</title>
        <authorList>
            <person name="Villinger F.J."/>
        </authorList>
    </citation>
    <scope>NUCLEOTIDE SEQUENCE [MRNA]</scope>
</reference>
<comment type="function">
    <text evidence="2 3">Heterodimerizes with IL12B to form the IL-12 cytokine or with EBI3/IL27B to form the IL-35 cytokine. IL-12 is primarily produced by professional antigen-presenting cells (APCs) such as B-cells and dendritic cells (DCs) as well as macrophages and granulocytes and regulates T-cell and natural killer-cell responses, induces the production of interferon-gamma (IFN-gamma), favors the differentiation of T-helper 1 (Th1) cells and is an important link between innate resistance and adaptive immunity. Mechanistically, exerts its biological effects through a receptor composed of IL12R1 and IL12R2 subunits. Binding to the receptor results in the rapid tyrosine phosphorylation of a number of cellular substrates including the JAK family kinases TYK2 and JAK2. In turn, recruited STAT4 gets phosphorylated and translocates to the nucleus where it regulates cytokine/growth factor responsive genes (By similarity). As part of IL-35, plays essential roles in maintaining the immune homeostasis of the liver microenvironment and also functions as an immune-suppressive cytokine (By similarity). Mediates biological events through unconventional receptors composed of IL12RB2 and gp130/IL6ST heterodimers or homodimers. Signaling requires the transcription factors STAT1 and STAT4, which form a unique heterodimer that binds to distinct DNA sites (By similarity).</text>
</comment>
<comment type="subunit">
    <text evidence="2 3">Heterodimer with IL12B; disulfide-linked. This heterodimer is known as interleukin IL-12. Heterodimer with EBI3/IL27B; not disulfide-linked. This heterodimer is known as interleukin IL-35. Interacts with NBR1; this interaction promotes IL-12 secretion (By similarity).</text>
</comment>
<comment type="subcellular location">
    <subcellularLocation>
        <location evidence="2">Secreted</location>
    </subcellularLocation>
</comment>
<comment type="similarity">
    <text evidence="5">Belongs to the IL-6 superfamily.</text>
</comment>
<dbReference type="EMBL" id="AY234219">
    <property type="protein sequence ID" value="AAO85332.1"/>
    <property type="molecule type" value="mRNA"/>
</dbReference>
<dbReference type="RefSeq" id="NP_001106107.1">
    <property type="nucleotide sequence ID" value="NM_001112637.1"/>
</dbReference>
<dbReference type="SMR" id="Q865Y2"/>
<dbReference type="STRING" id="9555.ENSPANP00000018310"/>
<dbReference type="GlyCosmos" id="Q865Y2">
    <property type="glycosylation" value="2 sites, No reported glycans"/>
</dbReference>
<dbReference type="GeneID" id="100126719"/>
<dbReference type="KEGG" id="panu:100126719"/>
<dbReference type="CTD" id="3592"/>
<dbReference type="eggNOG" id="ENOG502S8JN">
    <property type="taxonomic scope" value="Eukaryota"/>
</dbReference>
<dbReference type="OrthoDB" id="13309at314294"/>
<dbReference type="Proteomes" id="UP000028761">
    <property type="component" value="Unplaced"/>
</dbReference>
<dbReference type="GO" id="GO:0005615">
    <property type="term" value="C:extracellular space"/>
    <property type="evidence" value="ECO:0007669"/>
    <property type="project" value="UniProtKB-KW"/>
</dbReference>
<dbReference type="GO" id="GO:0005125">
    <property type="term" value="F:cytokine activity"/>
    <property type="evidence" value="ECO:0007669"/>
    <property type="project" value="UniProtKB-KW"/>
</dbReference>
<dbReference type="GO" id="GO:0008083">
    <property type="term" value="F:growth factor activity"/>
    <property type="evidence" value="ECO:0007669"/>
    <property type="project" value="UniProtKB-KW"/>
</dbReference>
<dbReference type="GO" id="GO:0005143">
    <property type="term" value="F:interleukin-12 receptor binding"/>
    <property type="evidence" value="ECO:0007669"/>
    <property type="project" value="InterPro"/>
</dbReference>
<dbReference type="GO" id="GO:0006955">
    <property type="term" value="P:immune response"/>
    <property type="evidence" value="ECO:0007669"/>
    <property type="project" value="InterPro"/>
</dbReference>
<dbReference type="FunFam" id="1.20.1250.10:FF:000020">
    <property type="entry name" value="Interleukin-12 subunit alpha"/>
    <property type="match status" value="1"/>
</dbReference>
<dbReference type="Gene3D" id="1.20.1250.10">
    <property type="match status" value="1"/>
</dbReference>
<dbReference type="InterPro" id="IPR009079">
    <property type="entry name" value="4_helix_cytokine-like_core"/>
</dbReference>
<dbReference type="InterPro" id="IPR050676">
    <property type="entry name" value="IL-12"/>
</dbReference>
<dbReference type="InterPro" id="IPR004281">
    <property type="entry name" value="IL-12_alpha"/>
</dbReference>
<dbReference type="PANTHER" id="PTHR48485:SF1">
    <property type="entry name" value="INTERLEUKIN-12 SUBUNIT ALPHA"/>
    <property type="match status" value="1"/>
</dbReference>
<dbReference type="PANTHER" id="PTHR48485">
    <property type="entry name" value="INTERLEUKIN-12 SUBUNIT BETA-RELATED"/>
    <property type="match status" value="1"/>
</dbReference>
<dbReference type="Pfam" id="PF03039">
    <property type="entry name" value="IL12"/>
    <property type="match status" value="1"/>
</dbReference>
<dbReference type="SUPFAM" id="SSF47266">
    <property type="entry name" value="4-helical cytokines"/>
    <property type="match status" value="1"/>
</dbReference>
<feature type="signal peptide" evidence="1">
    <location>
        <begin position="1"/>
        <end position="22"/>
    </location>
</feature>
<feature type="chain" id="PRO_0000015609" description="Interleukin-12 subunit alpha">
    <location>
        <begin position="23"/>
        <end position="219"/>
    </location>
</feature>
<feature type="glycosylation site" description="N-linked (GlcNAc...) asparagine" evidence="4">
    <location>
        <position position="24"/>
    </location>
</feature>
<feature type="glycosylation site" description="N-linked (GlcNAc...) asparagine" evidence="4">
    <location>
        <position position="93"/>
    </location>
</feature>
<feature type="disulfide bond" evidence="2">
    <location>
        <begin position="37"/>
        <end position="110"/>
    </location>
</feature>
<feature type="disulfide bond" evidence="1">
    <location>
        <begin position="64"/>
        <end position="196"/>
    </location>
</feature>
<feature type="disulfide bond" evidence="1">
    <location>
        <begin position="85"/>
        <end position="123"/>
    </location>
</feature>
<feature type="disulfide bond" description="Interchain (with C-199 in IL12B)" evidence="1">
    <location>
        <position position="96"/>
    </location>
</feature>
<gene>
    <name type="primary">IL12A</name>
</gene>
<protein>
    <recommendedName>
        <fullName>Interleukin-12 subunit alpha</fullName>
        <shortName>IL-12A</shortName>
    </recommendedName>
    <alternativeName>
        <fullName>Cytotoxic lymphocyte maturation factor 35 kDa subunit</fullName>
        <shortName>CLMF p35</shortName>
    </alternativeName>
    <alternativeName>
        <fullName>IL-12 subunit p35</fullName>
    </alternativeName>
</protein>
<name>IL12A_PAPAN</name>
<keyword id="KW-0202">Cytokine</keyword>
<keyword id="KW-1015">Disulfide bond</keyword>
<keyword id="KW-0325">Glycoprotein</keyword>
<keyword id="KW-0339">Growth factor</keyword>
<keyword id="KW-1185">Reference proteome</keyword>
<keyword id="KW-0964">Secreted</keyword>
<keyword id="KW-0732">Signal</keyword>
<sequence length="219" mass="24855">MCPARSLLLVATLVLLDYLSLARNLSVATPGPEMFPCLHHSQNLLKAASNTLQKARQILEFYPCTSEEIDHEDITKDKTSTVEACLPLELIKNESCLNSRETSVITKGSCLASRKTSFMMALCLRSIYEDLQIYQVEFKTMNAKLLMDPKRQIFLDQNILGVIDELMQALNFNSETVPQKSSLEEPDFYKTKIRLCILLHAFRIRAVTIDRVMSYLNAS</sequence>